<sequence length="257" mass="26479">MAIHPTAIVEAGAQVDPSCDIGPYAVIGPLVRMGPGNSVGAHAVVTGRTTLGASNRIFPHAVIGGIPQDLKYRGEDTALVIGDRNTFREFATVNLGTAGGGGVTRIGSGGLFMASSHIGHDCQVGDGAIIANSVAIAGHVLIEDHVHFGGLSASHQFCRVGRLAFVGGMTGVAMDVAPYCTVAGARGELAGLNTIGMQRAGMTEEQVGRVKQAYKIVFRSSLGLAEAIAQLEAELAGHPETDHFIAFLKGSQRGITR</sequence>
<name>LPXA_ANAD2</name>
<accession>B8JFW9</accession>
<evidence type="ECO:0000255" key="1">
    <source>
        <dbReference type="HAMAP-Rule" id="MF_00387"/>
    </source>
</evidence>
<keyword id="KW-0012">Acyltransferase</keyword>
<keyword id="KW-0963">Cytoplasm</keyword>
<keyword id="KW-0441">Lipid A biosynthesis</keyword>
<keyword id="KW-0444">Lipid biosynthesis</keyword>
<keyword id="KW-0443">Lipid metabolism</keyword>
<keyword id="KW-0677">Repeat</keyword>
<keyword id="KW-0808">Transferase</keyword>
<feature type="chain" id="PRO_1000134378" description="Acyl-[acyl-carrier-protein]--UDP-N-acetylglucosamine O-acyltransferase">
    <location>
        <begin position="1"/>
        <end position="257"/>
    </location>
</feature>
<protein>
    <recommendedName>
        <fullName evidence="1">Acyl-[acyl-carrier-protein]--UDP-N-acetylglucosamine O-acyltransferase</fullName>
        <shortName evidence="1">UDP-N-acetylglucosamine acyltransferase</shortName>
        <ecNumber evidence="1">2.3.1.129</ecNumber>
    </recommendedName>
</protein>
<gene>
    <name evidence="1" type="primary">lpxA</name>
    <name type="ordered locus">A2cp1_1213</name>
</gene>
<organism>
    <name type="scientific">Anaeromyxobacter dehalogenans (strain 2CP-1 / ATCC BAA-258)</name>
    <dbReference type="NCBI Taxonomy" id="455488"/>
    <lineage>
        <taxon>Bacteria</taxon>
        <taxon>Pseudomonadati</taxon>
        <taxon>Myxococcota</taxon>
        <taxon>Myxococcia</taxon>
        <taxon>Myxococcales</taxon>
        <taxon>Cystobacterineae</taxon>
        <taxon>Anaeromyxobacteraceae</taxon>
        <taxon>Anaeromyxobacter</taxon>
    </lineage>
</organism>
<dbReference type="EC" id="2.3.1.129" evidence="1"/>
<dbReference type="EMBL" id="CP001359">
    <property type="protein sequence ID" value="ACL64557.1"/>
    <property type="molecule type" value="Genomic_DNA"/>
</dbReference>
<dbReference type="RefSeq" id="WP_011420143.1">
    <property type="nucleotide sequence ID" value="NC_011891.1"/>
</dbReference>
<dbReference type="SMR" id="B8JFW9"/>
<dbReference type="KEGG" id="acp:A2cp1_1213"/>
<dbReference type="HOGENOM" id="CLU_061249_0_0_7"/>
<dbReference type="UniPathway" id="UPA00359">
    <property type="reaction ID" value="UER00477"/>
</dbReference>
<dbReference type="Proteomes" id="UP000007089">
    <property type="component" value="Chromosome"/>
</dbReference>
<dbReference type="GO" id="GO:0005737">
    <property type="term" value="C:cytoplasm"/>
    <property type="evidence" value="ECO:0007669"/>
    <property type="project" value="UniProtKB-SubCell"/>
</dbReference>
<dbReference type="GO" id="GO:0016020">
    <property type="term" value="C:membrane"/>
    <property type="evidence" value="ECO:0007669"/>
    <property type="project" value="GOC"/>
</dbReference>
<dbReference type="GO" id="GO:0008780">
    <property type="term" value="F:acyl-[acyl-carrier-protein]-UDP-N-acetylglucosamine O-acyltransferase activity"/>
    <property type="evidence" value="ECO:0007669"/>
    <property type="project" value="UniProtKB-UniRule"/>
</dbReference>
<dbReference type="GO" id="GO:0009245">
    <property type="term" value="P:lipid A biosynthetic process"/>
    <property type="evidence" value="ECO:0007669"/>
    <property type="project" value="UniProtKB-UniRule"/>
</dbReference>
<dbReference type="CDD" id="cd03351">
    <property type="entry name" value="LbH_UDP-GlcNAc_AT"/>
    <property type="match status" value="1"/>
</dbReference>
<dbReference type="Gene3D" id="2.160.10.10">
    <property type="entry name" value="Hexapeptide repeat proteins"/>
    <property type="match status" value="1"/>
</dbReference>
<dbReference type="Gene3D" id="1.20.1180.10">
    <property type="entry name" value="Udp N-acetylglucosamine O-acyltransferase, C-terminal domain"/>
    <property type="match status" value="1"/>
</dbReference>
<dbReference type="HAMAP" id="MF_00387">
    <property type="entry name" value="LpxA"/>
    <property type="match status" value="1"/>
</dbReference>
<dbReference type="InterPro" id="IPR029098">
    <property type="entry name" value="Acetyltransf_C"/>
</dbReference>
<dbReference type="InterPro" id="IPR037157">
    <property type="entry name" value="Acetyltransf_C_sf"/>
</dbReference>
<dbReference type="InterPro" id="IPR010137">
    <property type="entry name" value="Lipid_A_LpxA"/>
</dbReference>
<dbReference type="InterPro" id="IPR011004">
    <property type="entry name" value="Trimer_LpxA-like_sf"/>
</dbReference>
<dbReference type="NCBIfam" id="TIGR01852">
    <property type="entry name" value="lipid_A_lpxA"/>
    <property type="match status" value="1"/>
</dbReference>
<dbReference type="NCBIfam" id="NF003657">
    <property type="entry name" value="PRK05289.1"/>
    <property type="match status" value="1"/>
</dbReference>
<dbReference type="PANTHER" id="PTHR43480">
    <property type="entry name" value="ACYL-[ACYL-CARRIER-PROTEIN]--UDP-N-ACETYLGLUCOSAMINE O-ACYLTRANSFERASE"/>
    <property type="match status" value="1"/>
</dbReference>
<dbReference type="PANTHER" id="PTHR43480:SF1">
    <property type="entry name" value="ACYL-[ACYL-CARRIER-PROTEIN]--UDP-N-ACETYLGLUCOSAMINE O-ACYLTRANSFERASE, MITOCHONDRIAL-RELATED"/>
    <property type="match status" value="1"/>
</dbReference>
<dbReference type="Pfam" id="PF13720">
    <property type="entry name" value="Acetyltransf_11"/>
    <property type="match status" value="1"/>
</dbReference>
<dbReference type="PIRSF" id="PIRSF000456">
    <property type="entry name" value="UDP-GlcNAc_acltr"/>
    <property type="match status" value="1"/>
</dbReference>
<dbReference type="SUPFAM" id="SSF51161">
    <property type="entry name" value="Trimeric LpxA-like enzymes"/>
    <property type="match status" value="1"/>
</dbReference>
<comment type="function">
    <text evidence="1">Involved in the biosynthesis of lipid A, a phosphorylated glycolipid that anchors the lipopolysaccharide to the outer membrane of the cell.</text>
</comment>
<comment type="catalytic activity">
    <reaction evidence="1">
        <text>a (3R)-hydroxyacyl-[ACP] + UDP-N-acetyl-alpha-D-glucosamine = a UDP-3-O-[(3R)-3-hydroxyacyl]-N-acetyl-alpha-D-glucosamine + holo-[ACP]</text>
        <dbReference type="Rhea" id="RHEA:67812"/>
        <dbReference type="Rhea" id="RHEA-COMP:9685"/>
        <dbReference type="Rhea" id="RHEA-COMP:9945"/>
        <dbReference type="ChEBI" id="CHEBI:57705"/>
        <dbReference type="ChEBI" id="CHEBI:64479"/>
        <dbReference type="ChEBI" id="CHEBI:78827"/>
        <dbReference type="ChEBI" id="CHEBI:173225"/>
        <dbReference type="EC" id="2.3.1.129"/>
    </reaction>
</comment>
<comment type="pathway">
    <text evidence="1">Glycolipid biosynthesis; lipid IV(A) biosynthesis; lipid IV(A) from (3R)-3-hydroxytetradecanoyl-[acyl-carrier-protein] and UDP-N-acetyl-alpha-D-glucosamine: step 1/6.</text>
</comment>
<comment type="subunit">
    <text evidence="1">Homotrimer.</text>
</comment>
<comment type="subcellular location">
    <subcellularLocation>
        <location evidence="1">Cytoplasm</location>
    </subcellularLocation>
</comment>
<comment type="similarity">
    <text evidence="1">Belongs to the transferase hexapeptide repeat family. LpxA subfamily.</text>
</comment>
<proteinExistence type="inferred from homology"/>
<reference key="1">
    <citation type="submission" date="2009-01" db="EMBL/GenBank/DDBJ databases">
        <title>Complete sequence of Anaeromyxobacter dehalogenans 2CP-1.</title>
        <authorList>
            <person name="Lucas S."/>
            <person name="Copeland A."/>
            <person name="Lapidus A."/>
            <person name="Glavina del Rio T."/>
            <person name="Dalin E."/>
            <person name="Tice H."/>
            <person name="Bruce D."/>
            <person name="Goodwin L."/>
            <person name="Pitluck S."/>
            <person name="Saunders E."/>
            <person name="Brettin T."/>
            <person name="Detter J.C."/>
            <person name="Han C."/>
            <person name="Larimer F."/>
            <person name="Land M."/>
            <person name="Hauser L."/>
            <person name="Kyrpides N."/>
            <person name="Ovchinnikova G."/>
            <person name="Beliaev A.S."/>
            <person name="Richardson P."/>
        </authorList>
    </citation>
    <scope>NUCLEOTIDE SEQUENCE [LARGE SCALE GENOMIC DNA]</scope>
    <source>
        <strain>2CP-1 / ATCC BAA-258</strain>
    </source>
</reference>